<sequence>MKEAIDQFIQQKQLSKNSRLAYTYDLEQFLEQVGTINDTSLRLYQSSLQSLKLSVQKRKLSAVNQFLYFLYNQKYIEHYYKLNIPKDQKENSSQGSLLDLSVFWQESQVPQGRLIALLILENGLLPSEILSIKVADIQLDFQILSVEKAGQKRIVQLSSKLTEELSRMASGTYLFEKKGKPYSRQWAFRQLEAFLSEKGQAGLSAQSLREQYILRQLKDKRSLHDIARDLGLKSITTLEKYR</sequence>
<proteinExistence type="inferred from homology"/>
<reference key="1">
    <citation type="journal article" date="2007" name="J. Bacteriol.">
        <title>Genome-wide transcriptional changes in Streptococcus gordonii in response to competence signaling peptide.</title>
        <authorList>
            <person name="Vickerman M.M."/>
            <person name="Iobst S."/>
            <person name="Jesionowski A.M."/>
            <person name="Gill S.R."/>
        </authorList>
    </citation>
    <scope>NUCLEOTIDE SEQUENCE [LARGE SCALE GENOMIC DNA]</scope>
    <source>
        <strain>Challis / ATCC 35105 / BCRC 15272 / CH1 / DL1 / V288</strain>
    </source>
</reference>
<name>XERDL_STRGC</name>
<gene>
    <name type="ordered locus">SGO_1672</name>
</gene>
<accession>A8AYT9</accession>
<keyword id="KW-0963">Cytoplasm</keyword>
<keyword id="KW-0229">DNA integration</keyword>
<keyword id="KW-0233">DNA recombination</keyword>
<keyword id="KW-0238">DNA-binding</keyword>
<keyword id="KW-1185">Reference proteome</keyword>
<evidence type="ECO:0000255" key="1">
    <source>
        <dbReference type="HAMAP-Rule" id="MF_01817"/>
    </source>
</evidence>
<evidence type="ECO:0000255" key="2">
    <source>
        <dbReference type="PROSITE-ProRule" id="PRU01246"/>
    </source>
</evidence>
<evidence type="ECO:0000255" key="3">
    <source>
        <dbReference type="PROSITE-ProRule" id="PRU01248"/>
    </source>
</evidence>
<organism>
    <name type="scientific">Streptococcus gordonii (strain Challis / ATCC 35105 / BCRC 15272 / CH1 / DL1 / V288)</name>
    <dbReference type="NCBI Taxonomy" id="467705"/>
    <lineage>
        <taxon>Bacteria</taxon>
        <taxon>Bacillati</taxon>
        <taxon>Bacillota</taxon>
        <taxon>Bacilli</taxon>
        <taxon>Lactobacillales</taxon>
        <taxon>Streptococcaceae</taxon>
        <taxon>Streptococcus</taxon>
    </lineage>
</organism>
<dbReference type="EMBL" id="CP000725">
    <property type="protein sequence ID" value="ABV10617.1"/>
    <property type="molecule type" value="Genomic_DNA"/>
</dbReference>
<dbReference type="RefSeq" id="WP_012130729.1">
    <property type="nucleotide sequence ID" value="NC_009785.1"/>
</dbReference>
<dbReference type="SMR" id="A8AYT9"/>
<dbReference type="STRING" id="467705.SGO_1672"/>
<dbReference type="KEGG" id="sgo:SGO_1672"/>
<dbReference type="eggNOG" id="COG4974">
    <property type="taxonomic scope" value="Bacteria"/>
</dbReference>
<dbReference type="HOGENOM" id="CLU_1128554_0_0_9"/>
<dbReference type="Proteomes" id="UP000001131">
    <property type="component" value="Chromosome"/>
</dbReference>
<dbReference type="GO" id="GO:0005737">
    <property type="term" value="C:cytoplasm"/>
    <property type="evidence" value="ECO:0007669"/>
    <property type="project" value="UniProtKB-SubCell"/>
</dbReference>
<dbReference type="GO" id="GO:0003677">
    <property type="term" value="F:DNA binding"/>
    <property type="evidence" value="ECO:0007669"/>
    <property type="project" value="UniProtKB-KW"/>
</dbReference>
<dbReference type="GO" id="GO:0009037">
    <property type="term" value="F:tyrosine-based site-specific recombinase activity"/>
    <property type="evidence" value="ECO:0007669"/>
    <property type="project" value="UniProtKB-UniRule"/>
</dbReference>
<dbReference type="GO" id="GO:0006313">
    <property type="term" value="P:DNA transposition"/>
    <property type="evidence" value="ECO:0007669"/>
    <property type="project" value="UniProtKB-UniRule"/>
</dbReference>
<dbReference type="Gene3D" id="1.10.150.130">
    <property type="match status" value="1"/>
</dbReference>
<dbReference type="Gene3D" id="1.10.443.10">
    <property type="entry name" value="Intergrase catalytic core"/>
    <property type="match status" value="1"/>
</dbReference>
<dbReference type="HAMAP" id="MF_01817">
    <property type="entry name" value="Recomb_XerD_like"/>
    <property type="match status" value="1"/>
</dbReference>
<dbReference type="InterPro" id="IPR044068">
    <property type="entry name" value="CB"/>
</dbReference>
<dbReference type="InterPro" id="IPR011010">
    <property type="entry name" value="DNA_brk_join_enz"/>
</dbReference>
<dbReference type="InterPro" id="IPR013762">
    <property type="entry name" value="Integrase-like_cat_sf"/>
</dbReference>
<dbReference type="InterPro" id="IPR002104">
    <property type="entry name" value="Integrase_catalytic"/>
</dbReference>
<dbReference type="InterPro" id="IPR010998">
    <property type="entry name" value="Integrase_recombinase_N"/>
</dbReference>
<dbReference type="InterPro" id="IPR020876">
    <property type="entry name" value="Tyrosine_recombinase_XerD-like"/>
</dbReference>
<dbReference type="NCBIfam" id="NF002685">
    <property type="entry name" value="PRK02436.1"/>
    <property type="match status" value="1"/>
</dbReference>
<dbReference type="Pfam" id="PF00589">
    <property type="entry name" value="Phage_integrase"/>
    <property type="match status" value="1"/>
</dbReference>
<dbReference type="SUPFAM" id="SSF56349">
    <property type="entry name" value="DNA breaking-rejoining enzymes"/>
    <property type="match status" value="1"/>
</dbReference>
<dbReference type="PROSITE" id="PS51900">
    <property type="entry name" value="CB"/>
    <property type="match status" value="1"/>
</dbReference>
<dbReference type="PROSITE" id="PS51898">
    <property type="entry name" value="TYR_RECOMBINASE"/>
    <property type="match status" value="1"/>
</dbReference>
<comment type="function">
    <text evidence="1">Putative tyrosine recombinase. Not involved in the cutting and rejoining of the recombining DNA molecules on dif(SL) site.</text>
</comment>
<comment type="subcellular location">
    <subcellularLocation>
        <location evidence="1">Cytoplasm</location>
    </subcellularLocation>
</comment>
<comment type="similarity">
    <text evidence="1">Belongs to the 'phage' integrase family. XerD-like subfamily.</text>
</comment>
<protein>
    <recommendedName>
        <fullName evidence="1">Tyrosine recombinase XerD-like</fullName>
    </recommendedName>
</protein>
<feature type="chain" id="PRO_0000355190" description="Tyrosine recombinase XerD-like">
    <location>
        <begin position="1"/>
        <end position="242"/>
    </location>
</feature>
<feature type="domain" description="Core-binding (CB)" evidence="3">
    <location>
        <begin position="1"/>
        <end position="71"/>
    </location>
</feature>
<feature type="domain" description="Tyr recombinase" evidence="2">
    <location>
        <begin position="90"/>
        <end position="242"/>
    </location>
</feature>
<feature type="active site" evidence="2">
    <location>
        <position position="148"/>
    </location>
</feature>
<feature type="active site" evidence="2">
    <location>
        <position position="209"/>
    </location>
</feature>
<feature type="active site" description="O-(3'-phospho-DNA)-tyrosine intermediate" evidence="2">
    <location>
        <position position="241"/>
    </location>
</feature>